<evidence type="ECO:0000256" key="1">
    <source>
        <dbReference type="SAM" id="MobiDB-lite"/>
    </source>
</evidence>
<evidence type="ECO:0000303" key="2">
    <source>
    </source>
</evidence>
<evidence type="ECO:0000305" key="3"/>
<proteinExistence type="inferred from homology"/>
<organism>
    <name type="scientific">Escherichia phage P2</name>
    <name type="common">Bacteriophage P2</name>
    <dbReference type="NCBI Taxonomy" id="2905681"/>
    <lineage>
        <taxon>Viruses</taxon>
        <taxon>Duplodnaviria</taxon>
        <taxon>Heunggongvirae</taxon>
        <taxon>Uroviricota</taxon>
        <taxon>Caudoviricetes</taxon>
        <taxon>Peduoviridae</taxon>
        <taxon>Peduovirus</taxon>
        <taxon>Peduovirus P2</taxon>
    </lineage>
</organism>
<gene>
    <name type="primary">D</name>
</gene>
<dbReference type="EMBL" id="AF063097">
    <property type="protein sequence ID" value="AAD03295.1"/>
    <property type="molecule type" value="Genomic_DNA"/>
</dbReference>
<dbReference type="RefSeq" id="NP_046784.1">
    <property type="nucleotide sequence ID" value="NC_001895.1"/>
</dbReference>
<dbReference type="SMR" id="P10312"/>
<dbReference type="GeneID" id="77440803"/>
<dbReference type="KEGG" id="vg:77440803"/>
<dbReference type="Proteomes" id="UP000009092">
    <property type="component" value="Genome"/>
</dbReference>
<dbReference type="GO" id="GO:0098025">
    <property type="term" value="C:virus tail, baseplate"/>
    <property type="evidence" value="ECO:0007669"/>
    <property type="project" value="UniProtKB-KW"/>
</dbReference>
<dbReference type="InterPro" id="IPR052726">
    <property type="entry name" value="Phage_Baseplate_Hub"/>
</dbReference>
<dbReference type="PANTHER" id="PTHR35862">
    <property type="entry name" value="FELS-2 PROPHAGE PROTEIN"/>
    <property type="match status" value="1"/>
</dbReference>
<dbReference type="PANTHER" id="PTHR35862:SF3">
    <property type="entry name" value="FELS-2 PROPHAGE PROTEIN"/>
    <property type="match status" value="1"/>
</dbReference>
<dbReference type="Pfam" id="PF05954">
    <property type="entry name" value="Phage_GPD"/>
    <property type="match status" value="1"/>
</dbReference>
<dbReference type="SUPFAM" id="SSF69279">
    <property type="entry name" value="Phage tail proteins"/>
    <property type="match status" value="1"/>
</dbReference>
<keyword id="KW-0426">Late protein</keyword>
<keyword id="KW-1185">Reference proteome</keyword>
<keyword id="KW-1226">Viral baseplate protein</keyword>
<keyword id="KW-1227">Viral tail protein</keyword>
<keyword id="KW-0946">Virion</keyword>
<organismHost>
    <name type="scientific">Enterobacteriaceae</name>
    <dbReference type="NCBI Taxonomy" id="543"/>
</organismHost>
<accession>P10312</accession>
<sequence length="387" mass="42798">MLDALTFDAGSTLTPDYMLMLDSRDITGNISDRLMSMTLTDNRGFEADQLDIELNDADGQVGLPVRGAVLTVYIGWKGFALVCKGKFTVDEVEHRGAPDVVTIRARSADFRGTLNSRREGSWHDTTLGAIVKAIATRNRLEASVAPSLAGIKIPHIDQSQESDAKFLTRLAERNGGEVSVKMGKLLFLKAGQGVTASGKKIPQVTITRSDGDRHHFAIADRGAYTGVTAKWLHTKDPKPQKQKVKLKRKKKEKHLRALEHPKAKPVRQKKAPKVPEAREGEYMAGEADNVFALTTVYATKAQAMRAAQAKWDKLQRGVAEFSISLATGRADIYTETPVKVSGFKRVIDEQDWTITKVTHFLNNSGFTTSLELEVRLSDVEYETEDDE</sequence>
<protein>
    <recommendedName>
        <fullName evidence="3">Probable baseplate hub protein</fullName>
    </recommendedName>
    <alternativeName>
        <fullName evidence="3">Gene D protein</fullName>
        <shortName>GpD</shortName>
    </alternativeName>
</protein>
<feature type="chain" id="PRO_0000165249" description="Probable baseplate hub protein">
    <location>
        <begin position="1"/>
        <end position="387"/>
    </location>
</feature>
<feature type="region of interest" description="Disordered" evidence="1">
    <location>
        <begin position="233"/>
        <end position="275"/>
    </location>
</feature>
<feature type="compositionally biased region" description="Basic residues" evidence="1">
    <location>
        <begin position="240"/>
        <end position="254"/>
    </location>
</feature>
<feature type="compositionally biased region" description="Basic residues" evidence="1">
    <location>
        <begin position="263"/>
        <end position="272"/>
    </location>
</feature>
<comment type="function">
    <text evidence="2">Putative baseplate hub protein.</text>
</comment>
<comment type="subunit">
    <text evidence="2">Homotrimer.</text>
</comment>
<comment type="subcellular location">
    <subcellularLocation>
        <location evidence="3">Virion</location>
    </subcellularLocation>
</comment>
<comment type="induction">
    <text evidence="3">Expressed in the late phase of the viral replicative cycle.</text>
</comment>
<comment type="similarity">
    <text evidence="3">Belongs to the P2likevirus baseplate hub protein family.</text>
</comment>
<reference key="1">
    <citation type="journal article" date="2002" name="J. Bacteriol.">
        <title>Programmed translational frameshift in the bacteriophage P2 FETUD tail gene operon.</title>
        <authorList>
            <person name="Christie G.E."/>
            <person name="Temple L.M."/>
            <person name="Bartlett B.A."/>
            <person name="Goodwin T.S."/>
        </authorList>
    </citation>
    <scope>NUCLEOTIDE SEQUENCE [GENOMIC DNA]</scope>
</reference>
<reference key="2">
    <citation type="journal article" date="1986" name="Proc. Natl. Acad. Sci. U.S.A.">
        <title>Regulation of bacteriophage P2 late-gene expression: the ogr gene.</title>
        <authorList>
            <person name="Christie G.E."/>
            <person name="Haggaard-Ljungquist E."/>
            <person name="Feiwell R."/>
            <person name="Calendar R."/>
        </authorList>
    </citation>
    <scope>NUCLEOTIDE SEQUENCE [GENOMIC DNA] OF 367-387</scope>
</reference>
<reference key="3">
    <citation type="journal article" date="2012" name="Adv. Exp. Med. Biol.">
        <title>Contractile tail machines of bacteriophages.</title>
        <authorList>
            <person name="Leiman P.G."/>
            <person name="Shneider M.M."/>
        </authorList>
    </citation>
    <scope>REVIEW ON FUNCTION</scope>
</reference>
<name>BPD_BPP2</name>